<comment type="function">
    <text evidence="1">Bifunctional enzyme which can phosphorylate or dephosphorylate isocitrate dehydrogenase (IDH) on a specific serine residue. This is a regulatory mechanism which enables bacteria to bypass the Krebs cycle via the glyoxylate shunt in response to the source of carbon. When bacteria are grown on glucose, IDH is fully active and unphosphorylated, but when grown on acetate or ethanol, the activity of IDH declines drastically concomitant with its phosphorylation.</text>
</comment>
<comment type="catalytic activity">
    <reaction evidence="1">
        <text>L-seryl-[isocitrate dehydrogenase] + ATP = O-phospho-L-seryl-[isocitrate dehydrogenase] + ADP + H(+)</text>
        <dbReference type="Rhea" id="RHEA:43540"/>
        <dbReference type="Rhea" id="RHEA-COMP:10605"/>
        <dbReference type="Rhea" id="RHEA-COMP:10606"/>
        <dbReference type="ChEBI" id="CHEBI:15378"/>
        <dbReference type="ChEBI" id="CHEBI:29999"/>
        <dbReference type="ChEBI" id="CHEBI:30616"/>
        <dbReference type="ChEBI" id="CHEBI:83421"/>
        <dbReference type="ChEBI" id="CHEBI:456216"/>
        <dbReference type="EC" id="2.7.11.5"/>
    </reaction>
</comment>
<comment type="subcellular location">
    <subcellularLocation>
        <location evidence="1">Cytoplasm</location>
    </subcellularLocation>
</comment>
<comment type="similarity">
    <text evidence="1">Belongs to the AceK family.</text>
</comment>
<sequence>MSQPWPAAEIARVILDGFDDYREHFRRITLGARERFEQARWQDIQRAAAARINLYEEKVAEVNGWLRKGFEGQVLLDVEQWPLVKNAYIRLIDPRLDDELSETWYNSLFCSLFSHDQISDGCMFIHTTRPSMRVHERAAQTRTYALTDRLKGLLRAIFADYAFDVPYGDLEADLSRLEEQLRECLPDWVCKDPQLKIELFTPVLYRNKGAYLVGRLYTPDEQWPLVIPLLHREGHGIEADALITDEAEVSIIFSFTRSYFMVDVPVPGEFVNFLKRILPGKHIAELYTSIGFYKHGKSEFYRALINHLANSDDRFVMAPGVRGMVMSVFTLPGFNTVFKIIKDRFSPSKTVDRATVIEKYRLVKSVDRVGRMADTQEFADFRFPQGKFDPECLAELLEVAPSTVSLEGDTVLIRHCWTERRMTPLNLYLEHASEGQVLEALEDYGLAIKQLAAANIFPGDMLLKNFGVTRHGRVVFYDYDEISFLTEVNFRHIPPPRYPEDEMSGEPWYSIGPHDVFPEEFPPFLFADIGQRRLFSRLHGELYDADYWKGLQEAIRAGKVIDVFPYRRKSR</sequence>
<reference key="1">
    <citation type="journal article" date="2006" name="Nat. Biotechnol.">
        <title>Complete genome sequence of the entomopathogenic and metabolically versatile soil bacterium Pseudomonas entomophila.</title>
        <authorList>
            <person name="Vodovar N."/>
            <person name="Vallenet D."/>
            <person name="Cruveiller S."/>
            <person name="Rouy Z."/>
            <person name="Barbe V."/>
            <person name="Acosta C."/>
            <person name="Cattolico L."/>
            <person name="Jubin C."/>
            <person name="Lajus A."/>
            <person name="Segurens B."/>
            <person name="Vacherie B."/>
            <person name="Wincker P."/>
            <person name="Weissenbach J."/>
            <person name="Lemaitre B."/>
            <person name="Medigue C."/>
            <person name="Boccard F."/>
        </authorList>
    </citation>
    <scope>NUCLEOTIDE SEQUENCE [LARGE SCALE GENOMIC DNA]</scope>
    <source>
        <strain>L48</strain>
    </source>
</reference>
<name>ACEK_PSEE4</name>
<protein>
    <recommendedName>
        <fullName evidence="1">Isocitrate dehydrogenase kinase/phosphatase</fullName>
        <shortName evidence="1">IDH kinase/phosphatase</shortName>
        <shortName evidence="1">IDHK/P</shortName>
        <ecNumber evidence="1">2.7.11.5</ecNumber>
        <ecNumber evidence="1">3.1.3.-</ecNumber>
    </recommendedName>
</protein>
<proteinExistence type="inferred from homology"/>
<feature type="chain" id="PRO_0000288296" description="Isocitrate dehydrogenase kinase/phosphatase">
    <location>
        <begin position="1"/>
        <end position="571"/>
    </location>
</feature>
<feature type="active site" evidence="1">
    <location>
        <position position="374"/>
    </location>
</feature>
<feature type="binding site" evidence="1">
    <location>
        <begin position="318"/>
        <end position="324"/>
    </location>
    <ligand>
        <name>ATP</name>
        <dbReference type="ChEBI" id="CHEBI:30616"/>
    </ligand>
</feature>
<feature type="binding site" evidence="1">
    <location>
        <position position="339"/>
    </location>
    <ligand>
        <name>ATP</name>
        <dbReference type="ChEBI" id="CHEBI:30616"/>
    </ligand>
</feature>
<gene>
    <name evidence="1" type="primary">aceK</name>
    <name type="ordered locus">PSEEN4009</name>
</gene>
<dbReference type="EC" id="2.7.11.5" evidence="1"/>
<dbReference type="EC" id="3.1.3.-" evidence="1"/>
<dbReference type="EMBL" id="CT573326">
    <property type="protein sequence ID" value="CAK16708.1"/>
    <property type="molecule type" value="Genomic_DNA"/>
</dbReference>
<dbReference type="RefSeq" id="WP_011535080.1">
    <property type="nucleotide sequence ID" value="NC_008027.1"/>
</dbReference>
<dbReference type="SMR" id="Q1I6M7"/>
<dbReference type="STRING" id="384676.PSEEN4009"/>
<dbReference type="GeneID" id="32807027"/>
<dbReference type="KEGG" id="pen:PSEEN4009"/>
<dbReference type="eggNOG" id="COG4579">
    <property type="taxonomic scope" value="Bacteria"/>
</dbReference>
<dbReference type="HOGENOM" id="CLU_033804_1_1_6"/>
<dbReference type="OrthoDB" id="5287793at2"/>
<dbReference type="Proteomes" id="UP000000658">
    <property type="component" value="Chromosome"/>
</dbReference>
<dbReference type="GO" id="GO:0005737">
    <property type="term" value="C:cytoplasm"/>
    <property type="evidence" value="ECO:0007669"/>
    <property type="project" value="UniProtKB-SubCell"/>
</dbReference>
<dbReference type="GO" id="GO:0008772">
    <property type="term" value="F:[isocitrate dehydrogenase (NADP+)] kinase activity"/>
    <property type="evidence" value="ECO:0007669"/>
    <property type="project" value="UniProtKB-UniRule"/>
</dbReference>
<dbReference type="GO" id="GO:0016208">
    <property type="term" value="F:AMP binding"/>
    <property type="evidence" value="ECO:0007669"/>
    <property type="project" value="TreeGrafter"/>
</dbReference>
<dbReference type="GO" id="GO:0005524">
    <property type="term" value="F:ATP binding"/>
    <property type="evidence" value="ECO:0007669"/>
    <property type="project" value="UniProtKB-UniRule"/>
</dbReference>
<dbReference type="GO" id="GO:0004721">
    <property type="term" value="F:phosphoprotein phosphatase activity"/>
    <property type="evidence" value="ECO:0007669"/>
    <property type="project" value="UniProtKB-KW"/>
</dbReference>
<dbReference type="GO" id="GO:0004674">
    <property type="term" value="F:protein serine/threonine kinase activity"/>
    <property type="evidence" value="ECO:0007669"/>
    <property type="project" value="UniProtKB-KW"/>
</dbReference>
<dbReference type="GO" id="GO:0006006">
    <property type="term" value="P:glucose metabolic process"/>
    <property type="evidence" value="ECO:0007669"/>
    <property type="project" value="InterPro"/>
</dbReference>
<dbReference type="GO" id="GO:0006097">
    <property type="term" value="P:glyoxylate cycle"/>
    <property type="evidence" value="ECO:0007669"/>
    <property type="project" value="UniProtKB-UniRule"/>
</dbReference>
<dbReference type="GO" id="GO:0006099">
    <property type="term" value="P:tricarboxylic acid cycle"/>
    <property type="evidence" value="ECO:0007669"/>
    <property type="project" value="UniProtKB-UniRule"/>
</dbReference>
<dbReference type="HAMAP" id="MF_00747">
    <property type="entry name" value="AceK"/>
    <property type="match status" value="1"/>
</dbReference>
<dbReference type="InterPro" id="IPR046855">
    <property type="entry name" value="AceK_kinase"/>
</dbReference>
<dbReference type="InterPro" id="IPR046854">
    <property type="entry name" value="AceK_regulatory"/>
</dbReference>
<dbReference type="InterPro" id="IPR010452">
    <property type="entry name" value="Isocitrate_DH_AceK"/>
</dbReference>
<dbReference type="NCBIfam" id="NF002804">
    <property type="entry name" value="PRK02946.1"/>
    <property type="match status" value="1"/>
</dbReference>
<dbReference type="PANTHER" id="PTHR39559">
    <property type="match status" value="1"/>
</dbReference>
<dbReference type="PANTHER" id="PTHR39559:SF1">
    <property type="entry name" value="ISOCITRATE DEHYDROGENASE KINASE_PHOSPHATASE"/>
    <property type="match status" value="1"/>
</dbReference>
<dbReference type="Pfam" id="PF06315">
    <property type="entry name" value="AceK_kinase"/>
    <property type="match status" value="1"/>
</dbReference>
<dbReference type="Pfam" id="PF20423">
    <property type="entry name" value="AceK_regulatory"/>
    <property type="match status" value="1"/>
</dbReference>
<dbReference type="PIRSF" id="PIRSF000719">
    <property type="entry name" value="AceK"/>
    <property type="match status" value="1"/>
</dbReference>
<evidence type="ECO:0000255" key="1">
    <source>
        <dbReference type="HAMAP-Rule" id="MF_00747"/>
    </source>
</evidence>
<keyword id="KW-0067">ATP-binding</keyword>
<keyword id="KW-0963">Cytoplasm</keyword>
<keyword id="KW-0329">Glyoxylate bypass</keyword>
<keyword id="KW-0378">Hydrolase</keyword>
<keyword id="KW-0418">Kinase</keyword>
<keyword id="KW-0547">Nucleotide-binding</keyword>
<keyword id="KW-0904">Protein phosphatase</keyword>
<keyword id="KW-0723">Serine/threonine-protein kinase</keyword>
<keyword id="KW-0808">Transferase</keyword>
<keyword id="KW-0816">Tricarboxylic acid cycle</keyword>
<organism>
    <name type="scientific">Pseudomonas entomophila (strain L48)</name>
    <dbReference type="NCBI Taxonomy" id="384676"/>
    <lineage>
        <taxon>Bacteria</taxon>
        <taxon>Pseudomonadati</taxon>
        <taxon>Pseudomonadota</taxon>
        <taxon>Gammaproteobacteria</taxon>
        <taxon>Pseudomonadales</taxon>
        <taxon>Pseudomonadaceae</taxon>
        <taxon>Pseudomonas</taxon>
    </lineage>
</organism>
<accession>Q1I6M7</accession>